<accession>Q0CZD4</accession>
<dbReference type="EC" id="4.2.2.10"/>
<dbReference type="EMBL" id="CH476594">
    <property type="protein sequence ID" value="EAU39596.1"/>
    <property type="molecule type" value="Genomic_DNA"/>
</dbReference>
<dbReference type="RefSeq" id="XP_001211036.1">
    <property type="nucleotide sequence ID" value="XM_001211036.1"/>
</dbReference>
<dbReference type="SMR" id="Q0CZD4"/>
<dbReference type="STRING" id="341663.Q0CZD4"/>
<dbReference type="GlyCosmos" id="Q0CZD4">
    <property type="glycosylation" value="1 site, No reported glycans"/>
</dbReference>
<dbReference type="EnsemblFungi" id="EAU39596">
    <property type="protein sequence ID" value="EAU39596"/>
    <property type="gene ID" value="ATEG_00950"/>
</dbReference>
<dbReference type="GeneID" id="4355713"/>
<dbReference type="VEuPathDB" id="FungiDB:ATEG_00950"/>
<dbReference type="eggNOG" id="ENOG502QXM6">
    <property type="taxonomic scope" value="Eukaryota"/>
</dbReference>
<dbReference type="HOGENOM" id="CLU_021980_0_1_1"/>
<dbReference type="OMA" id="DWCGSYP"/>
<dbReference type="OrthoDB" id="1637350at2759"/>
<dbReference type="Proteomes" id="UP000007963">
    <property type="component" value="Unassembled WGS sequence"/>
</dbReference>
<dbReference type="GO" id="GO:0005576">
    <property type="term" value="C:extracellular region"/>
    <property type="evidence" value="ECO:0007669"/>
    <property type="project" value="UniProtKB-SubCell"/>
</dbReference>
<dbReference type="GO" id="GO:0030570">
    <property type="term" value="F:pectate lyase activity"/>
    <property type="evidence" value="ECO:0007669"/>
    <property type="project" value="InterPro"/>
</dbReference>
<dbReference type="GO" id="GO:0047490">
    <property type="term" value="F:pectin lyase activity"/>
    <property type="evidence" value="ECO:0000250"/>
    <property type="project" value="UniProtKB"/>
</dbReference>
<dbReference type="GO" id="GO:0071555">
    <property type="term" value="P:cell wall organization"/>
    <property type="evidence" value="ECO:0007669"/>
    <property type="project" value="UniProtKB-KW"/>
</dbReference>
<dbReference type="GO" id="GO:0045490">
    <property type="term" value="P:pectin catabolic process"/>
    <property type="evidence" value="ECO:0000250"/>
    <property type="project" value="UniProtKB"/>
</dbReference>
<dbReference type="FunFam" id="2.160.20.10:FF:000003">
    <property type="entry name" value="Pectin lyase F"/>
    <property type="match status" value="1"/>
</dbReference>
<dbReference type="Gene3D" id="2.160.20.10">
    <property type="entry name" value="Single-stranded right-handed beta-helix, Pectin lyase-like"/>
    <property type="match status" value="1"/>
</dbReference>
<dbReference type="InterPro" id="IPR002022">
    <property type="entry name" value="Pec_lyase"/>
</dbReference>
<dbReference type="InterPro" id="IPR012334">
    <property type="entry name" value="Pectin_lyas_fold"/>
</dbReference>
<dbReference type="InterPro" id="IPR011050">
    <property type="entry name" value="Pectin_lyase_fold/virulence"/>
</dbReference>
<dbReference type="InterPro" id="IPR045032">
    <property type="entry name" value="PEL"/>
</dbReference>
<dbReference type="PANTHER" id="PTHR31683">
    <property type="entry name" value="PECTATE LYASE 18-RELATED"/>
    <property type="match status" value="1"/>
</dbReference>
<dbReference type="PANTHER" id="PTHR31683:SF67">
    <property type="entry name" value="PECTIN LYASE F-RELATED"/>
    <property type="match status" value="1"/>
</dbReference>
<dbReference type="Pfam" id="PF00544">
    <property type="entry name" value="Pectate_lyase_4"/>
    <property type="match status" value="1"/>
</dbReference>
<dbReference type="SMART" id="SM00656">
    <property type="entry name" value="Amb_all"/>
    <property type="match status" value="1"/>
</dbReference>
<dbReference type="SUPFAM" id="SSF51126">
    <property type="entry name" value="Pectin lyase-like"/>
    <property type="match status" value="1"/>
</dbReference>
<comment type="function">
    <text evidence="1">Pectinolytic enzymes consist of four classes of enzymes: pectin lyase, polygalacturonase, pectin methylesterase and rhamnogalacturonase. Among pectinolytic enzymes, pectin lyase is the most important in depolymerization of pectin, since it cleaves internal glycosidic bonds of highly methylated pectins (By similarity).</text>
</comment>
<comment type="catalytic activity">
    <reaction>
        <text>Eliminative cleavage of (1-&gt;4)-alpha-D-galacturonan methyl ester to give oligosaccharides with 4-deoxy-6-O-methyl-alpha-D-galact-4-enuronosyl groups at their non-reducing ends.</text>
        <dbReference type="EC" id="4.2.2.10"/>
    </reaction>
</comment>
<comment type="subcellular location">
    <subcellularLocation>
        <location evidence="1">Secreted</location>
    </subcellularLocation>
</comment>
<comment type="similarity">
    <text evidence="4">Belongs to the polysaccharide lyase 1 family.</text>
</comment>
<sequence>MTLIRTVLMAAALLGASAHAQGVVGKPFGFAAGTTGGGNAAPAAPSDIKELAQWLSDDTPRVILIDKEFDFTGSEGTCADCACCVPSSNTCGSSGQNAIETSFGWCGSSPNVTCTYDKAGTKGMDVGSDKSIVGVGSAGVIRGKGLRLTGGASNVIIQNIHITDINPEYIWGGDAISLDGTDKIWIDHVKISLVGRQMFVTGYESSGSVTISNSEFDGRTSWSASCDGHHYWTLLGLGKNEQITFARNYIHHTSGRSPKLGESSYWHSYNNYWSDNSGHAFDVESAGKSLIEGNVFSNVKTPLTKENLDGVFAVSADDESTCSGSLGRSCIPNVLTSSGELSSAGDGVFSGWLSDEGDLTLMPASQVASYVKAHAGVGKLGAGDYSSSAIPSSTPAPSSSALAKRHGGHDRHGLGHIPHLTEGGPGAWHTPGPAPSWSWRTIGVRSTALPTPSPSSSSCAIGKPTAGPPRFPIFGDLGIF</sequence>
<reference key="1">
    <citation type="submission" date="2005-09" db="EMBL/GenBank/DDBJ databases">
        <title>Annotation of the Aspergillus terreus NIH2624 genome.</title>
        <authorList>
            <person name="Birren B.W."/>
            <person name="Lander E.S."/>
            <person name="Galagan J.E."/>
            <person name="Nusbaum C."/>
            <person name="Devon K."/>
            <person name="Henn M."/>
            <person name="Ma L.-J."/>
            <person name="Jaffe D.B."/>
            <person name="Butler J."/>
            <person name="Alvarez P."/>
            <person name="Gnerre S."/>
            <person name="Grabherr M."/>
            <person name="Kleber M."/>
            <person name="Mauceli E.W."/>
            <person name="Brockman W."/>
            <person name="Rounsley S."/>
            <person name="Young S.K."/>
            <person name="LaButti K."/>
            <person name="Pushparaj V."/>
            <person name="DeCaprio D."/>
            <person name="Crawford M."/>
            <person name="Koehrsen M."/>
            <person name="Engels R."/>
            <person name="Montgomery P."/>
            <person name="Pearson M."/>
            <person name="Howarth C."/>
            <person name="Larson L."/>
            <person name="Luoma S."/>
            <person name="White J."/>
            <person name="Alvarado L."/>
            <person name="Kodira C.D."/>
            <person name="Zeng Q."/>
            <person name="Oleary S."/>
            <person name="Yandava C."/>
            <person name="Denning D.W."/>
            <person name="Nierman W.C."/>
            <person name="Milne T."/>
            <person name="Madden K."/>
        </authorList>
    </citation>
    <scope>NUCLEOTIDE SEQUENCE [LARGE SCALE GENOMIC DNA]</scope>
    <source>
        <strain>NIH 2624 / FGSC A1156</strain>
    </source>
</reference>
<proteinExistence type="inferred from homology"/>
<organism>
    <name type="scientific">Aspergillus terreus (strain NIH 2624 / FGSC A1156)</name>
    <dbReference type="NCBI Taxonomy" id="341663"/>
    <lineage>
        <taxon>Eukaryota</taxon>
        <taxon>Fungi</taxon>
        <taxon>Dikarya</taxon>
        <taxon>Ascomycota</taxon>
        <taxon>Pezizomycotina</taxon>
        <taxon>Eurotiomycetes</taxon>
        <taxon>Eurotiomycetidae</taxon>
        <taxon>Eurotiales</taxon>
        <taxon>Aspergillaceae</taxon>
        <taxon>Aspergillus</taxon>
        <taxon>Aspergillus subgen. Circumdati</taxon>
    </lineage>
</organism>
<protein>
    <recommendedName>
        <fullName>Probable pectin lyase F-2</fullName>
        <shortName>PLF-2</shortName>
        <ecNumber>4.2.2.10</ecNumber>
    </recommendedName>
</protein>
<evidence type="ECO:0000250" key="1"/>
<evidence type="ECO:0000255" key="2"/>
<evidence type="ECO:0000256" key="3">
    <source>
        <dbReference type="SAM" id="MobiDB-lite"/>
    </source>
</evidence>
<evidence type="ECO:0000305" key="4"/>
<gene>
    <name type="primary">pelF-2</name>
    <name type="ORF">ATEG_00950</name>
</gene>
<name>PELF2_ASPTN</name>
<feature type="signal peptide" evidence="2">
    <location>
        <begin position="1"/>
        <end position="25"/>
    </location>
</feature>
<feature type="chain" id="PRO_0000394361" description="Probable pectin lyase F-2">
    <location>
        <begin position="26"/>
        <end position="480"/>
    </location>
</feature>
<feature type="region of interest" description="Disordered" evidence="3">
    <location>
        <begin position="386"/>
        <end position="436"/>
    </location>
</feature>
<feature type="compositionally biased region" description="Low complexity" evidence="3">
    <location>
        <begin position="386"/>
        <end position="401"/>
    </location>
</feature>
<feature type="active site" evidence="2">
    <location>
        <position position="256"/>
    </location>
</feature>
<feature type="glycosylation site" description="N-linked (GlcNAc...) asparagine" evidence="2">
    <location>
        <position position="111"/>
    </location>
</feature>
<feature type="disulfide bond" evidence="1">
    <location>
        <begin position="83"/>
        <end position="106"/>
    </location>
</feature>
<feature type="disulfide bond" evidence="1">
    <location>
        <begin position="322"/>
        <end position="330"/>
    </location>
</feature>
<keyword id="KW-0119">Carbohydrate metabolism</keyword>
<keyword id="KW-0961">Cell wall biogenesis/degradation</keyword>
<keyword id="KW-1015">Disulfide bond</keyword>
<keyword id="KW-0325">Glycoprotein</keyword>
<keyword id="KW-0456">Lyase</keyword>
<keyword id="KW-0624">Polysaccharide degradation</keyword>
<keyword id="KW-1185">Reference proteome</keyword>
<keyword id="KW-0964">Secreted</keyword>
<keyword id="KW-0732">Signal</keyword>